<accession>Q8CN61</accession>
<dbReference type="EC" id="5.4.2.11" evidence="1"/>
<dbReference type="EMBL" id="AE015929">
    <property type="protein sequence ID" value="AAO05636.1"/>
    <property type="molecule type" value="Genomic_DNA"/>
</dbReference>
<dbReference type="RefSeq" id="NP_765550.1">
    <property type="nucleotide sequence ID" value="NC_004461.1"/>
</dbReference>
<dbReference type="RefSeq" id="WP_001831569.1">
    <property type="nucleotide sequence ID" value="NZ_WBME01000003.1"/>
</dbReference>
<dbReference type="SMR" id="Q8CN61"/>
<dbReference type="KEGG" id="sep:SE_1995"/>
<dbReference type="PATRIC" id="fig|176280.10.peg.1949"/>
<dbReference type="eggNOG" id="COG0588">
    <property type="taxonomic scope" value="Bacteria"/>
</dbReference>
<dbReference type="HOGENOM" id="CLU_033323_1_1_9"/>
<dbReference type="OrthoDB" id="9781415at2"/>
<dbReference type="UniPathway" id="UPA00109">
    <property type="reaction ID" value="UER00186"/>
</dbReference>
<dbReference type="Proteomes" id="UP000001411">
    <property type="component" value="Chromosome"/>
</dbReference>
<dbReference type="GO" id="GO:0004619">
    <property type="term" value="F:phosphoglycerate mutase activity"/>
    <property type="evidence" value="ECO:0007669"/>
    <property type="project" value="UniProtKB-EC"/>
</dbReference>
<dbReference type="GO" id="GO:0006094">
    <property type="term" value="P:gluconeogenesis"/>
    <property type="evidence" value="ECO:0007669"/>
    <property type="project" value="UniProtKB-UniRule"/>
</dbReference>
<dbReference type="GO" id="GO:0006096">
    <property type="term" value="P:glycolytic process"/>
    <property type="evidence" value="ECO:0007669"/>
    <property type="project" value="UniProtKB-UniRule"/>
</dbReference>
<dbReference type="CDD" id="cd07067">
    <property type="entry name" value="HP_PGM_like"/>
    <property type="match status" value="1"/>
</dbReference>
<dbReference type="FunFam" id="3.40.50.1240:FF:000003">
    <property type="entry name" value="2,3-bisphosphoglycerate-dependent phosphoglycerate mutase"/>
    <property type="match status" value="1"/>
</dbReference>
<dbReference type="Gene3D" id="3.40.50.1240">
    <property type="entry name" value="Phosphoglycerate mutase-like"/>
    <property type="match status" value="1"/>
</dbReference>
<dbReference type="HAMAP" id="MF_01039">
    <property type="entry name" value="PGAM_GpmA"/>
    <property type="match status" value="1"/>
</dbReference>
<dbReference type="InterPro" id="IPR013078">
    <property type="entry name" value="His_Pase_superF_clade-1"/>
</dbReference>
<dbReference type="InterPro" id="IPR029033">
    <property type="entry name" value="His_PPase_superfam"/>
</dbReference>
<dbReference type="InterPro" id="IPR001345">
    <property type="entry name" value="PG/BPGM_mutase_AS"/>
</dbReference>
<dbReference type="InterPro" id="IPR005952">
    <property type="entry name" value="Phosphogly_mut1"/>
</dbReference>
<dbReference type="NCBIfam" id="TIGR01258">
    <property type="entry name" value="pgm_1"/>
    <property type="match status" value="1"/>
</dbReference>
<dbReference type="NCBIfam" id="NF010713">
    <property type="entry name" value="PRK14115.1"/>
    <property type="match status" value="1"/>
</dbReference>
<dbReference type="NCBIfam" id="NF010717">
    <property type="entry name" value="PRK14119.1"/>
    <property type="match status" value="1"/>
</dbReference>
<dbReference type="PANTHER" id="PTHR11931">
    <property type="entry name" value="PHOSPHOGLYCERATE MUTASE"/>
    <property type="match status" value="1"/>
</dbReference>
<dbReference type="Pfam" id="PF00300">
    <property type="entry name" value="His_Phos_1"/>
    <property type="match status" value="1"/>
</dbReference>
<dbReference type="SMART" id="SM00855">
    <property type="entry name" value="PGAM"/>
    <property type="match status" value="1"/>
</dbReference>
<dbReference type="SUPFAM" id="SSF53254">
    <property type="entry name" value="Phosphoglycerate mutase-like"/>
    <property type="match status" value="1"/>
</dbReference>
<dbReference type="PROSITE" id="PS00175">
    <property type="entry name" value="PG_MUTASE"/>
    <property type="match status" value="1"/>
</dbReference>
<protein>
    <recommendedName>
        <fullName evidence="1">2,3-bisphosphoglycerate-dependent phosphoglycerate mutase</fullName>
        <shortName evidence="1">BPG-dependent PGAM</shortName>
        <shortName evidence="1">PGAM</shortName>
        <shortName evidence="1">Phosphoglyceromutase</shortName>
        <shortName evidence="1">dPGM</shortName>
        <ecNumber evidence="1">5.4.2.11</ecNumber>
    </recommendedName>
</protein>
<sequence>MPKLILCRHGQSEWNAKNLFTGWADVKLSKQGIEEAQSAGKKIYDNQIEIDIAFTSLLTRALETTQYILAGSDQQWIPVYKSWRLNERHYGGLQGLNKDDARKKWGEDQVHQWRRSYDVRPPRESEEQREAYLKNRRYQHIDHRMMPYCESLKDTLERVVPFWTDHISQHLLDDKTVLVSAHGNSIRALIKYLEGLSEEDIVGYEIKTGAPLVYELTDDLVVKDKYYL</sequence>
<organism>
    <name type="scientific">Staphylococcus epidermidis (strain ATCC 12228 / FDA PCI 1200)</name>
    <dbReference type="NCBI Taxonomy" id="176280"/>
    <lineage>
        <taxon>Bacteria</taxon>
        <taxon>Bacillati</taxon>
        <taxon>Bacillota</taxon>
        <taxon>Bacilli</taxon>
        <taxon>Bacillales</taxon>
        <taxon>Staphylococcaceae</taxon>
        <taxon>Staphylococcus</taxon>
    </lineage>
</organism>
<comment type="function">
    <text evidence="1">Catalyzes the interconversion of 2-phosphoglycerate and 3-phosphoglycerate.</text>
</comment>
<comment type="catalytic activity">
    <reaction evidence="1">
        <text>(2R)-2-phosphoglycerate = (2R)-3-phosphoglycerate</text>
        <dbReference type="Rhea" id="RHEA:15901"/>
        <dbReference type="ChEBI" id="CHEBI:58272"/>
        <dbReference type="ChEBI" id="CHEBI:58289"/>
        <dbReference type="EC" id="5.4.2.11"/>
    </reaction>
</comment>
<comment type="pathway">
    <text evidence="1">Carbohydrate degradation; glycolysis; pyruvate from D-glyceraldehyde 3-phosphate: step 3/5.</text>
</comment>
<comment type="similarity">
    <text evidence="1">Belongs to the phosphoglycerate mutase family. BPG-dependent PGAM subfamily.</text>
</comment>
<reference key="1">
    <citation type="journal article" date="2003" name="Mol. Microbiol.">
        <title>Genome-based analysis of virulence genes in a non-biofilm-forming Staphylococcus epidermidis strain (ATCC 12228).</title>
        <authorList>
            <person name="Zhang Y.-Q."/>
            <person name="Ren S.-X."/>
            <person name="Li H.-L."/>
            <person name="Wang Y.-X."/>
            <person name="Fu G."/>
            <person name="Yang J."/>
            <person name="Qin Z.-Q."/>
            <person name="Miao Y.-G."/>
            <person name="Wang W.-Y."/>
            <person name="Chen R.-S."/>
            <person name="Shen Y."/>
            <person name="Chen Z."/>
            <person name="Yuan Z.-H."/>
            <person name="Zhao G.-P."/>
            <person name="Qu D."/>
            <person name="Danchin A."/>
            <person name="Wen Y.-M."/>
        </authorList>
    </citation>
    <scope>NUCLEOTIDE SEQUENCE [LARGE SCALE GENOMIC DNA]</scope>
    <source>
        <strain>ATCC 12228 / FDA PCI 1200</strain>
    </source>
</reference>
<feature type="chain" id="PRO_0000179916" description="2,3-bisphosphoglycerate-dependent phosphoglycerate mutase">
    <location>
        <begin position="1"/>
        <end position="228"/>
    </location>
</feature>
<feature type="active site" description="Tele-phosphohistidine intermediate" evidence="1">
    <location>
        <position position="9"/>
    </location>
</feature>
<feature type="active site" description="Proton donor/acceptor" evidence="1">
    <location>
        <position position="87"/>
    </location>
</feature>
<feature type="binding site" evidence="1">
    <location>
        <begin position="8"/>
        <end position="15"/>
    </location>
    <ligand>
        <name>substrate</name>
    </ligand>
</feature>
<feature type="binding site" evidence="1">
    <location>
        <begin position="21"/>
        <end position="22"/>
    </location>
    <ligand>
        <name>substrate</name>
    </ligand>
</feature>
<feature type="binding site" evidence="1">
    <location>
        <position position="60"/>
    </location>
    <ligand>
        <name>substrate</name>
    </ligand>
</feature>
<feature type="binding site" evidence="1">
    <location>
        <begin position="87"/>
        <end position="90"/>
    </location>
    <ligand>
        <name>substrate</name>
    </ligand>
</feature>
<feature type="binding site" evidence="1">
    <location>
        <position position="98"/>
    </location>
    <ligand>
        <name>substrate</name>
    </ligand>
</feature>
<feature type="binding site" evidence="1">
    <location>
        <begin position="114"/>
        <end position="115"/>
    </location>
    <ligand>
        <name>substrate</name>
    </ligand>
</feature>
<feature type="binding site" evidence="1">
    <location>
        <begin position="183"/>
        <end position="184"/>
    </location>
    <ligand>
        <name>substrate</name>
    </ligand>
</feature>
<feature type="site" description="Transition state stabilizer" evidence="1">
    <location>
        <position position="182"/>
    </location>
</feature>
<gene>
    <name evidence="1" type="primary">gpmA</name>
    <name type="ordered locus">SE_1995</name>
</gene>
<name>GPMA_STAES</name>
<evidence type="ECO:0000255" key="1">
    <source>
        <dbReference type="HAMAP-Rule" id="MF_01039"/>
    </source>
</evidence>
<proteinExistence type="inferred from homology"/>
<keyword id="KW-0312">Gluconeogenesis</keyword>
<keyword id="KW-0324">Glycolysis</keyword>
<keyword id="KW-0413">Isomerase</keyword>